<protein>
    <recommendedName>
        <fullName>AP-2 complex subunit alpha</fullName>
    </recommendedName>
    <alternativeName>
        <fullName>Alpha-adaptin</fullName>
    </alternativeName>
</protein>
<sequence>MAPVRGDGMRGLAVFISDIRNCKSKEAEVKRINKELANIRSKFKGDKTLDGYQKKKYVCKLLFIFLLGHDIDFGHMEAVNLLSSNKYSEKQIGYLFISVLVNTNSDLIRLIIQSIKNDLQSRNPVHVNLALQCIANIGSRDMAESFSNEIPKLLVSGDTMDVVKQSAALCLLRLFRSSPDIIPGGEWTSRIIHLLNDQHMGVVTAATSLIDALVKRNPDEYKGCVNLAVSRLSRIVTASYTDLQDYTYYFVPAPWLSVKLLRLLQNYNPVTEEAGVRARLNETLETILNKAQEPPKSKKVQHSNAKNAVLFEAINLIIHSDSEPNLLVRACNQLGQFLSNRETNLRYLALESMCHLATSEFSHEEVKKHQEVVILSMKMEKDVSVRQMAVDLLYAMCDRGNAEEIVQEMLNYLETADYSIREEMVLKVAILAEKYATDYTWYVDVILNLIRIAGDYVSEEVWYRVIQIVINREEVQGYAAKTVFEALQAPACHENMVKVGGYILGEFGNLIAGDSRSAPLVQFKLLHSKYHLCSPMTRALLLSTYIKFINLFPEIRTNIQDVFRQHSNLRSADAELQQRASEYLQLSIVASTDVLATVLEEMPSFPERESSILAVLKKKKPGRVPENEIRESKSPAPLTSAAQNNALVNNSHSKLNNSNANTDLLGLSTPPSNNIGSGSNSNSTLIDVLGDMYGSNSNNNSSAVYNTKKFLFKNNGVLFENEMLQIGVKSEFRQNLGRLGLFYGNKTQVPLTNFNPVLQWSAEDALKLNVQMKVVEPTLEAGAQIQQLLTAECIEDYADAPTIEISFRYNGTQQKFSIKLPLSVNKFFEPTEMNAESFFARWKNLSGEQQRSQKVFKAAQPLDLPGARNKLMGFGMQLLDQVDPNPDNMVCAGIIHTQSQQVGCLMRLEPNKQAQMFRLTVRASKETVTREICDLLTDQF</sequence>
<comment type="function">
    <text evidence="5 6">Adaptins are components of the adapter complexes which link clathrin to receptors in coated vesicles. Clathrin-associated protein complexes are believed to interact with the cytoplasmic tails of membrane proteins, leading to their selection and concentration. AP-2alpha is a subunit of the plasma membrane adapter.</text>
</comment>
<comment type="subunit">
    <text evidence="1">Adaptor protein complex 2 (AP-2) is a heterotetramer composed of two large adaptins (alpha-type and beta-type subunits), a medium adaptin (mu-type subunit AP50) and a small adaptin (sigma-type subunit AP17).</text>
</comment>
<comment type="subcellular location">
    <subcellularLocation>
        <location evidence="5 6">Cell membrane</location>
        <topology evidence="8">Peripheral membrane protein</topology>
        <orientation evidence="8">Cytoplasmic side</orientation>
    </subcellularLocation>
    <subcellularLocation>
        <location evidence="5">Membrane</location>
        <location evidence="5">Coated pit</location>
        <topology evidence="8">Peripheral membrane protein</topology>
        <orientation evidence="8">Cytoplasmic side</orientation>
    </subcellularLocation>
    <text evidence="5">Component of the coat surrounding the cytoplasmic face of coated vesicles in the plasma membrane.</text>
</comment>
<comment type="alternative products">
    <event type="alternative splicing"/>
    <isoform>
        <id>P91926-1</id>
        <name>A</name>
        <sequence type="displayed"/>
    </isoform>
    <isoform>
        <id>P91926-2</id>
        <name>B</name>
        <sequence type="described" ref="VSP_023135"/>
    </isoform>
</comment>
<comment type="tissue specificity">
    <text evidence="5 6">Expressed in the Garland cells, imaginal disks, adult midgut precursors, the antenno-maxillary complex, the endoderm, the fat bodies, and the visceral mesoderm and cells of the CNS and PNS including neuroblasts, the presumptive stomatogastric nervous system, and the lateral chordotonal sense organs.</text>
</comment>
<comment type="RNA editing">
    <location>
        <position position="207" evidence="3 7"/>
    </location>
    <text>Partially edited. Target of Adar.</text>
</comment>
<comment type="similarity">
    <text evidence="8">Belongs to the adaptor complexes large subunit family.</text>
</comment>
<comment type="sequence caution" evidence="8">
    <conflict type="erroneous initiation">
        <sequence resource="EMBL-CDS" id="AAO39461"/>
    </conflict>
    <text>Truncated N-terminus.</text>
</comment>
<name>AP2A_DROME</name>
<feature type="chain" id="PRO_0000193735" description="AP-2 complex subunit alpha">
    <location>
        <begin position="1"/>
        <end position="940"/>
    </location>
</feature>
<feature type="region of interest" description="Disordered" evidence="2">
    <location>
        <begin position="651"/>
        <end position="679"/>
    </location>
</feature>
<feature type="compositionally biased region" description="Polar residues" evidence="2">
    <location>
        <begin position="651"/>
        <end position="662"/>
    </location>
</feature>
<feature type="compositionally biased region" description="Low complexity" evidence="2">
    <location>
        <begin position="668"/>
        <end position="679"/>
    </location>
</feature>
<feature type="modified residue" description="Phosphoserine" evidence="4">
    <location>
        <position position="632"/>
    </location>
</feature>
<feature type="modified residue" description="Phosphoserine" evidence="4">
    <location>
        <position position="634"/>
    </location>
</feature>
<feature type="splice variant" id="VSP_023135" description="In isoform B." evidence="8">
    <original>APVRGDGMRGLAVFISDIRN</original>
    <variation>ERAEGCEVVSPIDQSRGGKESEASADESLLFY</variation>
    <location>
        <begin position="2"/>
        <end position="21"/>
    </location>
</feature>
<feature type="sequence variant" description="In RNA edited version.">
    <original>T</original>
    <variation>A</variation>
    <location>
        <position position="207"/>
    </location>
</feature>
<feature type="sequence conflict" description="In Ref. 2; CAA73533." evidence="8" ref="2">
    <original>N</original>
    <variation>E</variation>
    <location>
        <position position="325"/>
    </location>
</feature>
<feature type="sequence conflict" description="In Ref. 2; CAA73533." evidence="8" ref="2">
    <original>A</original>
    <variation>P</variation>
    <location>
        <position position="489"/>
    </location>
</feature>
<feature type="sequence conflict" description="In Ref. 2; CAA73533." evidence="8" ref="2">
    <original>S</original>
    <variation>N</variation>
    <location>
        <position position="587"/>
    </location>
</feature>
<feature type="sequence conflict" description="In Ref. 2; CAA73533." evidence="8" ref="2">
    <original>KFLF</original>
    <variation>FVS</variation>
    <location>
        <begin position="709"/>
        <end position="712"/>
    </location>
</feature>
<feature type="sequence conflict" description="In Ref. 2; CAA73533." evidence="8" ref="2">
    <original>EM</original>
    <variation>GK</variation>
    <location>
        <begin position="722"/>
        <end position="723"/>
    </location>
</feature>
<feature type="sequence conflict" description="In Ref. 2; CAA73533." evidence="8" ref="2">
    <original>LFY</original>
    <variation>FSN</variation>
    <location>
        <begin position="741"/>
        <end position="743"/>
    </location>
</feature>
<feature type="sequence conflict" description="In Ref. 2; CAA73533." evidence="8" ref="2">
    <original>Q</original>
    <variation>P</variation>
    <location>
        <position position="877"/>
    </location>
</feature>
<evidence type="ECO:0000250" key="1"/>
<evidence type="ECO:0000256" key="2">
    <source>
        <dbReference type="SAM" id="MobiDB-lite"/>
    </source>
</evidence>
<evidence type="ECO:0000269" key="3">
    <source>
    </source>
</evidence>
<evidence type="ECO:0000269" key="4">
    <source>
    </source>
</evidence>
<evidence type="ECO:0000269" key="5">
    <source>
    </source>
</evidence>
<evidence type="ECO:0000269" key="6">
    <source>
    </source>
</evidence>
<evidence type="ECO:0000269" key="7">
    <source ref="6"/>
</evidence>
<evidence type="ECO:0000305" key="8"/>
<organism>
    <name type="scientific">Drosophila melanogaster</name>
    <name type="common">Fruit fly</name>
    <dbReference type="NCBI Taxonomy" id="7227"/>
    <lineage>
        <taxon>Eukaryota</taxon>
        <taxon>Metazoa</taxon>
        <taxon>Ecdysozoa</taxon>
        <taxon>Arthropoda</taxon>
        <taxon>Hexapoda</taxon>
        <taxon>Insecta</taxon>
        <taxon>Pterygota</taxon>
        <taxon>Neoptera</taxon>
        <taxon>Endopterygota</taxon>
        <taxon>Diptera</taxon>
        <taxon>Brachycera</taxon>
        <taxon>Muscomorpha</taxon>
        <taxon>Ephydroidea</taxon>
        <taxon>Drosophilidae</taxon>
        <taxon>Drosophila</taxon>
        <taxon>Sophophora</taxon>
    </lineage>
</organism>
<reference key="1">
    <citation type="journal article" date="1997" name="Cell">
        <title>Role of Drosophila alpha-adaptin in presynaptic vesicle recycling.</title>
        <authorList>
            <person name="Gonzalez-Gaitan M.A."/>
            <person name="Jaeckle H."/>
        </authorList>
    </citation>
    <scope>NUCLEOTIDE SEQUENCE [MRNA] (ISOFORM A)</scope>
    <scope>FUNCTION</scope>
    <scope>SUBCELLULAR LOCATION</scope>
    <scope>TISSUE SPECIFICITY</scope>
    <source>
        <strain>Canton-S</strain>
        <tissue>Embryo</tissue>
    </source>
</reference>
<reference key="2">
    <citation type="journal article" date="1997" name="Mol. Biol. Cell">
        <title>Alpha-adaptin, a marker for endocytosis, is expressed in complex patterns during Drosophila development.</title>
        <authorList>
            <person name="Dornan S.C."/>
            <person name="Jackson A.P."/>
            <person name="Gay N.J."/>
        </authorList>
    </citation>
    <scope>NUCLEOTIDE SEQUENCE [MRNA] (ISOFORM A)</scope>
    <scope>FUNCTION</scope>
    <scope>SUBCELLULAR LOCATION</scope>
    <scope>TISSUE SPECIFICITY</scope>
    <source>
        <tissue>Embryo</tissue>
    </source>
</reference>
<reference key="3">
    <citation type="journal article" date="2000" name="Science">
        <title>The genome sequence of Drosophila melanogaster.</title>
        <authorList>
            <person name="Adams M.D."/>
            <person name="Celniker S.E."/>
            <person name="Holt R.A."/>
            <person name="Evans C.A."/>
            <person name="Gocayne J.D."/>
            <person name="Amanatides P.G."/>
            <person name="Scherer S.E."/>
            <person name="Li P.W."/>
            <person name="Hoskins R.A."/>
            <person name="Galle R.F."/>
            <person name="George R.A."/>
            <person name="Lewis S.E."/>
            <person name="Richards S."/>
            <person name="Ashburner M."/>
            <person name="Henderson S.N."/>
            <person name="Sutton G.G."/>
            <person name="Wortman J.R."/>
            <person name="Yandell M.D."/>
            <person name="Zhang Q."/>
            <person name="Chen L.X."/>
            <person name="Brandon R.C."/>
            <person name="Rogers Y.-H.C."/>
            <person name="Blazej R.G."/>
            <person name="Champe M."/>
            <person name="Pfeiffer B.D."/>
            <person name="Wan K.H."/>
            <person name="Doyle C."/>
            <person name="Baxter E.G."/>
            <person name="Helt G."/>
            <person name="Nelson C.R."/>
            <person name="Miklos G.L.G."/>
            <person name="Abril J.F."/>
            <person name="Agbayani A."/>
            <person name="An H.-J."/>
            <person name="Andrews-Pfannkoch C."/>
            <person name="Baldwin D."/>
            <person name="Ballew R.M."/>
            <person name="Basu A."/>
            <person name="Baxendale J."/>
            <person name="Bayraktaroglu L."/>
            <person name="Beasley E.M."/>
            <person name="Beeson K.Y."/>
            <person name="Benos P.V."/>
            <person name="Berman B.P."/>
            <person name="Bhandari D."/>
            <person name="Bolshakov S."/>
            <person name="Borkova D."/>
            <person name="Botchan M.R."/>
            <person name="Bouck J."/>
            <person name="Brokstein P."/>
            <person name="Brottier P."/>
            <person name="Burtis K.C."/>
            <person name="Busam D.A."/>
            <person name="Butler H."/>
            <person name="Cadieu E."/>
            <person name="Center A."/>
            <person name="Chandra I."/>
            <person name="Cherry J.M."/>
            <person name="Cawley S."/>
            <person name="Dahlke C."/>
            <person name="Davenport L.B."/>
            <person name="Davies P."/>
            <person name="de Pablos B."/>
            <person name="Delcher A."/>
            <person name="Deng Z."/>
            <person name="Mays A.D."/>
            <person name="Dew I."/>
            <person name="Dietz S.M."/>
            <person name="Dodson K."/>
            <person name="Doup L.E."/>
            <person name="Downes M."/>
            <person name="Dugan-Rocha S."/>
            <person name="Dunkov B.C."/>
            <person name="Dunn P."/>
            <person name="Durbin K.J."/>
            <person name="Evangelista C.C."/>
            <person name="Ferraz C."/>
            <person name="Ferriera S."/>
            <person name="Fleischmann W."/>
            <person name="Fosler C."/>
            <person name="Gabrielian A.E."/>
            <person name="Garg N.S."/>
            <person name="Gelbart W.M."/>
            <person name="Glasser K."/>
            <person name="Glodek A."/>
            <person name="Gong F."/>
            <person name="Gorrell J.H."/>
            <person name="Gu Z."/>
            <person name="Guan P."/>
            <person name="Harris M."/>
            <person name="Harris N.L."/>
            <person name="Harvey D.A."/>
            <person name="Heiman T.J."/>
            <person name="Hernandez J.R."/>
            <person name="Houck J."/>
            <person name="Hostin D."/>
            <person name="Houston K.A."/>
            <person name="Howland T.J."/>
            <person name="Wei M.-H."/>
            <person name="Ibegwam C."/>
            <person name="Jalali M."/>
            <person name="Kalush F."/>
            <person name="Karpen G.H."/>
            <person name="Ke Z."/>
            <person name="Kennison J.A."/>
            <person name="Ketchum K.A."/>
            <person name="Kimmel B.E."/>
            <person name="Kodira C.D."/>
            <person name="Kraft C.L."/>
            <person name="Kravitz S."/>
            <person name="Kulp D."/>
            <person name="Lai Z."/>
            <person name="Lasko P."/>
            <person name="Lei Y."/>
            <person name="Levitsky A.A."/>
            <person name="Li J.H."/>
            <person name="Li Z."/>
            <person name="Liang Y."/>
            <person name="Lin X."/>
            <person name="Liu X."/>
            <person name="Mattei B."/>
            <person name="McIntosh T.C."/>
            <person name="McLeod M.P."/>
            <person name="McPherson D."/>
            <person name="Merkulov G."/>
            <person name="Milshina N.V."/>
            <person name="Mobarry C."/>
            <person name="Morris J."/>
            <person name="Moshrefi A."/>
            <person name="Mount S.M."/>
            <person name="Moy M."/>
            <person name="Murphy B."/>
            <person name="Murphy L."/>
            <person name="Muzny D.M."/>
            <person name="Nelson D.L."/>
            <person name="Nelson D.R."/>
            <person name="Nelson K.A."/>
            <person name="Nixon K."/>
            <person name="Nusskern D.R."/>
            <person name="Pacleb J.M."/>
            <person name="Palazzolo M."/>
            <person name="Pittman G.S."/>
            <person name="Pan S."/>
            <person name="Pollard J."/>
            <person name="Puri V."/>
            <person name="Reese M.G."/>
            <person name="Reinert K."/>
            <person name="Remington K."/>
            <person name="Saunders R.D.C."/>
            <person name="Scheeler F."/>
            <person name="Shen H."/>
            <person name="Shue B.C."/>
            <person name="Siden-Kiamos I."/>
            <person name="Simpson M."/>
            <person name="Skupski M.P."/>
            <person name="Smith T.J."/>
            <person name="Spier E."/>
            <person name="Spradling A.C."/>
            <person name="Stapleton M."/>
            <person name="Strong R."/>
            <person name="Sun E."/>
            <person name="Svirskas R."/>
            <person name="Tector C."/>
            <person name="Turner R."/>
            <person name="Venter E."/>
            <person name="Wang A.H."/>
            <person name="Wang X."/>
            <person name="Wang Z.-Y."/>
            <person name="Wassarman D.A."/>
            <person name="Weinstock G.M."/>
            <person name="Weissenbach J."/>
            <person name="Williams S.M."/>
            <person name="Woodage T."/>
            <person name="Worley K.C."/>
            <person name="Wu D."/>
            <person name="Yang S."/>
            <person name="Yao Q.A."/>
            <person name="Ye J."/>
            <person name="Yeh R.-F."/>
            <person name="Zaveri J.S."/>
            <person name="Zhan M."/>
            <person name="Zhang G."/>
            <person name="Zhao Q."/>
            <person name="Zheng L."/>
            <person name="Zheng X.H."/>
            <person name="Zhong F.N."/>
            <person name="Zhong W."/>
            <person name="Zhou X."/>
            <person name="Zhu S.C."/>
            <person name="Zhu X."/>
            <person name="Smith H.O."/>
            <person name="Gibbs R.A."/>
            <person name="Myers E.W."/>
            <person name="Rubin G.M."/>
            <person name="Venter J.C."/>
        </authorList>
    </citation>
    <scope>NUCLEOTIDE SEQUENCE [LARGE SCALE GENOMIC DNA]</scope>
    <source>
        <strain>Berkeley</strain>
    </source>
</reference>
<reference key="4">
    <citation type="journal article" date="2002" name="Genome Biol.">
        <title>Annotation of the Drosophila melanogaster euchromatic genome: a systematic review.</title>
        <authorList>
            <person name="Misra S."/>
            <person name="Crosby M.A."/>
            <person name="Mungall C.J."/>
            <person name="Matthews B.B."/>
            <person name="Campbell K.S."/>
            <person name="Hradecky P."/>
            <person name="Huang Y."/>
            <person name="Kaminker J.S."/>
            <person name="Millburn G.H."/>
            <person name="Prochnik S.E."/>
            <person name="Smith C.D."/>
            <person name="Tupy J.L."/>
            <person name="Whitfield E.J."/>
            <person name="Bayraktaroglu L."/>
            <person name="Berman B.P."/>
            <person name="Bettencourt B.R."/>
            <person name="Celniker S.E."/>
            <person name="de Grey A.D.N.J."/>
            <person name="Drysdale R.A."/>
            <person name="Harris N.L."/>
            <person name="Richter J."/>
            <person name="Russo S."/>
            <person name="Schroeder A.J."/>
            <person name="Shu S.Q."/>
            <person name="Stapleton M."/>
            <person name="Yamada C."/>
            <person name="Ashburner M."/>
            <person name="Gelbart W.M."/>
            <person name="Rubin G.M."/>
            <person name="Lewis S.E."/>
        </authorList>
    </citation>
    <scope>GENOME REANNOTATION</scope>
    <scope>ALTERNATIVE SPLICING</scope>
    <source>
        <strain>Berkeley</strain>
    </source>
</reference>
<reference key="5">
    <citation type="submission" date="2008-05" db="EMBL/GenBank/DDBJ databases">
        <authorList>
            <person name="Carlson J.W."/>
            <person name="Booth B."/>
            <person name="Frise E."/>
            <person name="Park S."/>
            <person name="Wan K.H."/>
            <person name="Yu C."/>
            <person name="Celniker S.E."/>
        </authorList>
    </citation>
    <scope>NUCLEOTIDE SEQUENCE [LARGE SCALE MRNA] (ISOFORM A)</scope>
    <source>
        <strain>Berkeley</strain>
        <tissue>Embryo</tissue>
    </source>
</reference>
<reference key="6">
    <citation type="submission" date="2003-02" db="EMBL/GenBank/DDBJ databases">
        <authorList>
            <person name="Stapleton M."/>
            <person name="Brokstein P."/>
            <person name="Hong L."/>
            <person name="Agbayani A."/>
            <person name="Carlson J.W."/>
            <person name="Champe M."/>
            <person name="Chavez C."/>
            <person name="Dorsett V."/>
            <person name="Dresnek D."/>
            <person name="Farfan D."/>
            <person name="Frise E."/>
            <person name="George R.A."/>
            <person name="Gonzalez M."/>
            <person name="Guarin H."/>
            <person name="Kronmiller B."/>
            <person name="Li P.W."/>
            <person name="Liao G."/>
            <person name="Miranda A."/>
            <person name="Mungall C.J."/>
            <person name="Nunoo J."/>
            <person name="Pacleb J.M."/>
            <person name="Paragas V."/>
            <person name="Park S."/>
            <person name="Patel S."/>
            <person name="Phouanenavong S."/>
            <person name="Wan K.H."/>
            <person name="Yu C."/>
            <person name="Lewis S.E."/>
            <person name="Rubin G.M."/>
            <person name="Celniker S.E."/>
        </authorList>
    </citation>
    <scope>NUCLEOTIDE SEQUENCE [LARGE SCALE MRNA] OF 93-940</scope>
    <scope>RNA EDITING OF POSITION 207</scope>
    <source>
        <strain>Berkeley</strain>
        <tissue>Head</tissue>
    </source>
</reference>
<reference key="7">
    <citation type="journal article" date="2006" name="RNA">
        <title>RNA editing in Drosophila melanogaster: new targets and functional consequences.</title>
        <authorList>
            <person name="Stapleton M."/>
            <person name="Carlson J.W."/>
            <person name="Celniker S.E."/>
        </authorList>
    </citation>
    <scope>RNA EDITING OF POSITION 207</scope>
</reference>
<reference key="8">
    <citation type="journal article" date="2008" name="J. Proteome Res.">
        <title>Phosphoproteome analysis of Drosophila melanogaster embryos.</title>
        <authorList>
            <person name="Zhai B."/>
            <person name="Villen J."/>
            <person name="Beausoleil S.A."/>
            <person name="Mintseris J."/>
            <person name="Gygi S.P."/>
        </authorList>
    </citation>
    <scope>PHOSPHORYLATION [LARGE SCALE ANALYSIS] AT SER-632 AND SER-634</scope>
    <scope>IDENTIFICATION BY MASS SPECTROMETRY</scope>
    <source>
        <tissue>Embryo</tissue>
    </source>
</reference>
<gene>
    <name type="primary">AP-2alpha</name>
    <name type="ORF">CG4260</name>
</gene>
<dbReference type="EMBL" id="Y11104">
    <property type="protein sequence ID" value="CAA71991.1"/>
    <property type="molecule type" value="mRNA"/>
</dbReference>
<dbReference type="EMBL" id="Y13092">
    <property type="protein sequence ID" value="CAA73533.1"/>
    <property type="molecule type" value="mRNA"/>
</dbReference>
<dbReference type="EMBL" id="AE014134">
    <property type="protein sequence ID" value="AAF56103.2"/>
    <property type="molecule type" value="Genomic_DNA"/>
</dbReference>
<dbReference type="EMBL" id="AE014134">
    <property type="protein sequence ID" value="AAS64634.1"/>
    <property type="molecule type" value="Genomic_DNA"/>
</dbReference>
<dbReference type="EMBL" id="BT032839">
    <property type="protein sequence ID" value="ACD81853.1"/>
    <property type="molecule type" value="mRNA"/>
</dbReference>
<dbReference type="EMBL" id="BT003458">
    <property type="protein sequence ID" value="AAO39461.1"/>
    <property type="status" value="ALT_INIT"/>
    <property type="molecule type" value="mRNA"/>
</dbReference>
<dbReference type="RefSeq" id="NP_476819.2">
    <molecule id="P91926-1"/>
    <property type="nucleotide sequence ID" value="NM_057471.6"/>
</dbReference>
<dbReference type="RefSeq" id="NP_995607.1">
    <molecule id="P91926-2"/>
    <property type="nucleotide sequence ID" value="NM_205885.2"/>
</dbReference>
<dbReference type="SMR" id="P91926"/>
<dbReference type="BioGRID" id="59467">
    <property type="interactions" value="27"/>
</dbReference>
<dbReference type="ComplexPortal" id="CPX-2725">
    <property type="entry name" value="Adaptor complex AP-2"/>
</dbReference>
<dbReference type="FunCoup" id="P91926">
    <property type="interactions" value="2213"/>
</dbReference>
<dbReference type="IntAct" id="P91926">
    <property type="interactions" value="54"/>
</dbReference>
<dbReference type="MINT" id="P91926"/>
<dbReference type="STRING" id="7227.FBpp0088945"/>
<dbReference type="iPTMnet" id="P91926"/>
<dbReference type="PaxDb" id="7227-FBpp0088945"/>
<dbReference type="DNASU" id="33211"/>
<dbReference type="EnsemblMetazoa" id="FBtr0089488">
    <molecule id="P91926-1"/>
    <property type="protein sequence ID" value="FBpp0088490"/>
    <property type="gene ID" value="FBgn0264855"/>
</dbReference>
<dbReference type="EnsemblMetazoa" id="FBtr0089489">
    <molecule id="P91926-2"/>
    <property type="protein sequence ID" value="FBpp0088945"/>
    <property type="gene ID" value="FBgn0264855"/>
</dbReference>
<dbReference type="GeneID" id="33211"/>
<dbReference type="KEGG" id="dme:Dmel_CG4260"/>
<dbReference type="AGR" id="FB:FBgn0264855"/>
<dbReference type="CTD" id="33211"/>
<dbReference type="FlyBase" id="FBgn0264855">
    <property type="gene designation" value="AP-2alpha"/>
</dbReference>
<dbReference type="VEuPathDB" id="VectorBase:FBgn0264855"/>
<dbReference type="eggNOG" id="KOG1077">
    <property type="taxonomic scope" value="Eukaryota"/>
</dbReference>
<dbReference type="GeneTree" id="ENSGT00950000182838"/>
<dbReference type="HOGENOM" id="CLU_003824_1_0_1"/>
<dbReference type="InParanoid" id="P91926"/>
<dbReference type="OMA" id="PVLMHRY"/>
<dbReference type="OrthoDB" id="413467at2759"/>
<dbReference type="PhylomeDB" id="P91926"/>
<dbReference type="Reactome" id="R-DME-177504">
    <property type="pathway name" value="Retrograde neurotrophin signalling"/>
</dbReference>
<dbReference type="Reactome" id="R-DME-3928665">
    <property type="pathway name" value="EPH-ephrin mediated repulsion of cells"/>
</dbReference>
<dbReference type="Reactome" id="R-DME-416993">
    <property type="pathway name" value="Trafficking of GluR2-containing AMPA receptors"/>
</dbReference>
<dbReference type="Reactome" id="R-DME-437239">
    <property type="pathway name" value="Recycling pathway of L1"/>
</dbReference>
<dbReference type="Reactome" id="R-DME-5099900">
    <property type="pathway name" value="WNT5A-dependent internalization of FZD4"/>
</dbReference>
<dbReference type="Reactome" id="R-DME-5140745">
    <property type="pathway name" value="WNT5A-dependent internalization of FZD2, FZD5 and ROR2"/>
</dbReference>
<dbReference type="Reactome" id="R-DME-6798695">
    <property type="pathway name" value="Neutrophil degranulation"/>
</dbReference>
<dbReference type="Reactome" id="R-DME-8856825">
    <property type="pathway name" value="Cargo recognition for clathrin-mediated endocytosis"/>
</dbReference>
<dbReference type="Reactome" id="R-DME-8856828">
    <property type="pathway name" value="Clathrin-mediated endocytosis"/>
</dbReference>
<dbReference type="Reactome" id="R-DME-8866427">
    <property type="pathway name" value="VLDLR internalisation and degradation"/>
</dbReference>
<dbReference type="Reactome" id="R-DME-8964038">
    <property type="pathway name" value="LDL clearance"/>
</dbReference>
<dbReference type="SignaLink" id="P91926"/>
<dbReference type="BioGRID-ORCS" id="33211">
    <property type="hits" value="0 hits in 3 CRISPR screens"/>
</dbReference>
<dbReference type="GenomeRNAi" id="33211"/>
<dbReference type="PRO" id="PR:P91926"/>
<dbReference type="Proteomes" id="UP000000803">
    <property type="component" value="Chromosome 2L"/>
</dbReference>
<dbReference type="Bgee" id="FBgn0264855">
    <property type="expression patterns" value="Expressed in embryonic/larval hemocyte (Drosophila) and 269 other cell types or tissues"/>
</dbReference>
<dbReference type="ExpressionAtlas" id="P91926">
    <property type="expression patterns" value="baseline and differential"/>
</dbReference>
<dbReference type="GO" id="GO:0030122">
    <property type="term" value="C:AP-2 adaptor complex"/>
    <property type="evidence" value="ECO:0000315"/>
    <property type="project" value="FlyBase"/>
</dbReference>
<dbReference type="GO" id="GO:0005905">
    <property type="term" value="C:clathrin-coated pit"/>
    <property type="evidence" value="ECO:0000314"/>
    <property type="project" value="UniProtKB"/>
</dbReference>
<dbReference type="GO" id="GO:0005886">
    <property type="term" value="C:plasma membrane"/>
    <property type="evidence" value="ECO:0000314"/>
    <property type="project" value="FlyBase"/>
</dbReference>
<dbReference type="GO" id="GO:0098793">
    <property type="term" value="C:presynapse"/>
    <property type="evidence" value="ECO:0007669"/>
    <property type="project" value="GOC"/>
</dbReference>
<dbReference type="GO" id="GO:0035615">
    <property type="term" value="F:clathrin adaptor activity"/>
    <property type="evidence" value="ECO:0000315"/>
    <property type="project" value="FlyBase"/>
</dbReference>
<dbReference type="GO" id="GO:0008356">
    <property type="term" value="P:asymmetric cell division"/>
    <property type="evidence" value="ECO:0000304"/>
    <property type="project" value="FlyBase"/>
</dbReference>
<dbReference type="GO" id="GO:0072583">
    <property type="term" value="P:clathrin-dependent endocytosis"/>
    <property type="evidence" value="ECO:0000318"/>
    <property type="project" value="GO_Central"/>
</dbReference>
<dbReference type="GO" id="GO:0006897">
    <property type="term" value="P:endocytosis"/>
    <property type="evidence" value="ECO:0000315"/>
    <property type="project" value="FlyBase"/>
</dbReference>
<dbReference type="GO" id="GO:0030707">
    <property type="term" value="P:follicle cell of egg chamber development"/>
    <property type="evidence" value="ECO:0000315"/>
    <property type="project" value="FlyBase"/>
</dbReference>
<dbReference type="GO" id="GO:0006886">
    <property type="term" value="P:intracellular protein transport"/>
    <property type="evidence" value="ECO:0007669"/>
    <property type="project" value="InterPro"/>
</dbReference>
<dbReference type="GO" id="GO:1990386">
    <property type="term" value="P:mitotic cleavage furrow ingression"/>
    <property type="evidence" value="ECO:0000315"/>
    <property type="project" value="UniProtKB"/>
</dbReference>
<dbReference type="GO" id="GO:0010508">
    <property type="term" value="P:positive regulation of autophagy"/>
    <property type="evidence" value="ECO:0000315"/>
    <property type="project" value="FlyBase"/>
</dbReference>
<dbReference type="GO" id="GO:0045807">
    <property type="term" value="P:positive regulation of endocytosis"/>
    <property type="evidence" value="ECO:0000315"/>
    <property type="project" value="FlyBase"/>
</dbReference>
<dbReference type="GO" id="GO:0038010">
    <property type="term" value="P:positive regulation of signal transduction by receptor internalization"/>
    <property type="evidence" value="ECO:0000315"/>
    <property type="project" value="FlyBase"/>
</dbReference>
<dbReference type="GO" id="GO:0008104">
    <property type="term" value="P:protein localization"/>
    <property type="evidence" value="ECO:0000315"/>
    <property type="project" value="FlyBase"/>
</dbReference>
<dbReference type="GO" id="GO:0015031">
    <property type="term" value="P:protein transport"/>
    <property type="evidence" value="ECO:0000314"/>
    <property type="project" value="UniProtKB"/>
</dbReference>
<dbReference type="GO" id="GO:0031623">
    <property type="term" value="P:receptor internalization"/>
    <property type="evidence" value="ECO:0000316"/>
    <property type="project" value="FlyBase"/>
</dbReference>
<dbReference type="GO" id="GO:0030100">
    <property type="term" value="P:regulation of endocytosis"/>
    <property type="evidence" value="ECO:0000314"/>
    <property type="project" value="FlyBase"/>
</dbReference>
<dbReference type="GO" id="GO:0048488">
    <property type="term" value="P:synaptic vesicle endocytosis"/>
    <property type="evidence" value="ECO:0000314"/>
    <property type="project" value="UniProtKB"/>
</dbReference>
<dbReference type="GO" id="GO:0048489">
    <property type="term" value="P:synaptic vesicle transport"/>
    <property type="evidence" value="ECO:0000304"/>
    <property type="project" value="FlyBase"/>
</dbReference>
<dbReference type="FunFam" id="1.25.10.10:FF:000020">
    <property type="entry name" value="AP-2 complex subunit alpha"/>
    <property type="match status" value="1"/>
</dbReference>
<dbReference type="FunFam" id="2.60.40.1230:FF:000003">
    <property type="entry name" value="AP-2 complex subunit alpha"/>
    <property type="match status" value="1"/>
</dbReference>
<dbReference type="FunFam" id="3.30.310.10:FF:000004">
    <property type="entry name" value="AP-2 complex subunit alpha"/>
    <property type="match status" value="1"/>
</dbReference>
<dbReference type="Gene3D" id="2.60.40.1230">
    <property type="match status" value="1"/>
</dbReference>
<dbReference type="Gene3D" id="1.25.10.10">
    <property type="entry name" value="Leucine-rich Repeat Variant"/>
    <property type="match status" value="1"/>
</dbReference>
<dbReference type="Gene3D" id="3.30.310.10">
    <property type="entry name" value="TATA-Binding Protein"/>
    <property type="match status" value="1"/>
</dbReference>
<dbReference type="InterPro" id="IPR050840">
    <property type="entry name" value="Adaptor_Complx_Large_Subunit"/>
</dbReference>
<dbReference type="InterPro" id="IPR017104">
    <property type="entry name" value="AP2_complex_asu"/>
</dbReference>
<dbReference type="InterPro" id="IPR011989">
    <property type="entry name" value="ARM-like"/>
</dbReference>
<dbReference type="InterPro" id="IPR016024">
    <property type="entry name" value="ARM-type_fold"/>
</dbReference>
<dbReference type="InterPro" id="IPR002553">
    <property type="entry name" value="Clathrin/coatomer_adapt-like_N"/>
</dbReference>
<dbReference type="InterPro" id="IPR003164">
    <property type="entry name" value="Clathrin_a-adaptin_app_sub_C"/>
</dbReference>
<dbReference type="InterPro" id="IPR008152">
    <property type="entry name" value="Clathrin_a/b/g-adaptin_app_Ig"/>
</dbReference>
<dbReference type="InterPro" id="IPR013041">
    <property type="entry name" value="Clathrin_app_Ig-like_sf"/>
</dbReference>
<dbReference type="InterPro" id="IPR009028">
    <property type="entry name" value="Coatomer/calthrin_app_sub_C"/>
</dbReference>
<dbReference type="InterPro" id="IPR012295">
    <property type="entry name" value="TBP_dom_sf"/>
</dbReference>
<dbReference type="PANTHER" id="PTHR22780">
    <property type="entry name" value="ADAPTIN, ALPHA/GAMMA/EPSILON"/>
    <property type="match status" value="1"/>
</dbReference>
<dbReference type="Pfam" id="PF01602">
    <property type="entry name" value="Adaptin_N"/>
    <property type="match status" value="1"/>
</dbReference>
<dbReference type="Pfam" id="PF02296">
    <property type="entry name" value="Alpha_adaptin_C"/>
    <property type="match status" value="1"/>
</dbReference>
<dbReference type="Pfam" id="PF02883">
    <property type="entry name" value="Alpha_adaptinC2"/>
    <property type="match status" value="1"/>
</dbReference>
<dbReference type="PIRSF" id="PIRSF037091">
    <property type="entry name" value="AP2_complex_alpha"/>
    <property type="match status" value="1"/>
</dbReference>
<dbReference type="SMART" id="SM00809">
    <property type="entry name" value="Alpha_adaptinC2"/>
    <property type="match status" value="1"/>
</dbReference>
<dbReference type="SUPFAM" id="SSF48371">
    <property type="entry name" value="ARM repeat"/>
    <property type="match status" value="1"/>
</dbReference>
<dbReference type="SUPFAM" id="SSF49348">
    <property type="entry name" value="Clathrin adaptor appendage domain"/>
    <property type="match status" value="1"/>
</dbReference>
<dbReference type="SUPFAM" id="SSF55711">
    <property type="entry name" value="Subdomain of clathrin and coatomer appendage domain"/>
    <property type="match status" value="1"/>
</dbReference>
<proteinExistence type="evidence at protein level"/>
<keyword id="KW-0025">Alternative splicing</keyword>
<keyword id="KW-1003">Cell membrane</keyword>
<keyword id="KW-0168">Coated pit</keyword>
<keyword id="KW-0254">Endocytosis</keyword>
<keyword id="KW-0472">Membrane</keyword>
<keyword id="KW-0597">Phosphoprotein</keyword>
<keyword id="KW-0653">Protein transport</keyword>
<keyword id="KW-1185">Reference proteome</keyword>
<keyword id="KW-0691">RNA editing</keyword>
<keyword id="KW-0813">Transport</keyword>
<accession>P91926</accession>
<accession>B3DN51</accession>
<accession>O01937</accession>
<accession>Q7KTZ5</accession>
<accession>Q86P64</accession>
<accession>Q9VPP4</accession>